<accession>Q57SD6</accession>
<feature type="chain" id="PRO_0000286739" description="Putative 2-aminoethylphosphonate import ATP-binding protein PhnT">
    <location>
        <begin position="1"/>
        <end position="369"/>
    </location>
</feature>
<feature type="domain" description="ABC transporter" evidence="2">
    <location>
        <begin position="19"/>
        <end position="250"/>
    </location>
</feature>
<feature type="binding site" evidence="2">
    <location>
        <begin position="51"/>
        <end position="58"/>
    </location>
    <ligand>
        <name>ATP</name>
        <dbReference type="ChEBI" id="CHEBI:30616"/>
    </ligand>
</feature>
<evidence type="ECO:0000250" key="1"/>
<evidence type="ECO:0000255" key="2">
    <source>
        <dbReference type="PROSITE-ProRule" id="PRU00434"/>
    </source>
</evidence>
<evidence type="ECO:0000305" key="3"/>
<proteinExistence type="inferred from homology"/>
<organism>
    <name type="scientific">Salmonella choleraesuis (strain SC-B67)</name>
    <dbReference type="NCBI Taxonomy" id="321314"/>
    <lineage>
        <taxon>Bacteria</taxon>
        <taxon>Pseudomonadati</taxon>
        <taxon>Pseudomonadota</taxon>
        <taxon>Gammaproteobacteria</taxon>
        <taxon>Enterobacterales</taxon>
        <taxon>Enterobacteriaceae</taxon>
        <taxon>Salmonella</taxon>
    </lineage>
</organism>
<keyword id="KW-0067">ATP-binding</keyword>
<keyword id="KW-0997">Cell inner membrane</keyword>
<keyword id="KW-1003">Cell membrane</keyword>
<keyword id="KW-0472">Membrane</keyword>
<keyword id="KW-0547">Nucleotide-binding</keyword>
<keyword id="KW-0813">Transport</keyword>
<gene>
    <name type="primary">phnT</name>
    <name type="ordered locus">SCH_0469</name>
</gene>
<name>PHNT_SALCH</name>
<sequence>MLMKTTAVHAPASQGTSGIVLDSLRVAYHGNVVLKPLSLTIEPGEVLALIGPSGSGKTTVLRAVAGFVQPAGGRILIGDTDVTHLPPYKRGLAMVVQNYALFPHLKVEDNVAFGLRAQKQPKALINERVTQALKTVGMSDYAARYPHQLSGGQQQRVAIARAIAVRPRVLLLDEPLSALDAQIRHNMVEELARLHRELPELTILYVTHDQTEALTLADKIGIMKDGSLIAHGETRALYQHPPNRFASEFLGRANILSAIALGITEAPGLVHVSCGGAVIRAFSRGSHHGYNKLLCIRPQHLSLTPRSAYSNRFNATLQSVHWQGDLTHLLCDVAGETVRMVLTHVNPLPRVGDKLALWFEPDDAVLIEV</sequence>
<dbReference type="EMBL" id="AE017220">
    <property type="protein sequence ID" value="AAX64375.1"/>
    <property type="molecule type" value="Genomic_DNA"/>
</dbReference>
<dbReference type="RefSeq" id="WP_001539306.1">
    <property type="nucleotide sequence ID" value="NC_006905.1"/>
</dbReference>
<dbReference type="SMR" id="Q57SD6"/>
<dbReference type="KEGG" id="sec:SCH_0469"/>
<dbReference type="HOGENOM" id="CLU_000604_1_1_6"/>
<dbReference type="Proteomes" id="UP000000538">
    <property type="component" value="Chromosome"/>
</dbReference>
<dbReference type="GO" id="GO:0043190">
    <property type="term" value="C:ATP-binding cassette (ABC) transporter complex"/>
    <property type="evidence" value="ECO:0007669"/>
    <property type="project" value="InterPro"/>
</dbReference>
<dbReference type="GO" id="GO:0005524">
    <property type="term" value="F:ATP binding"/>
    <property type="evidence" value="ECO:0007669"/>
    <property type="project" value="UniProtKB-KW"/>
</dbReference>
<dbReference type="GO" id="GO:0016887">
    <property type="term" value="F:ATP hydrolysis activity"/>
    <property type="evidence" value="ECO:0007669"/>
    <property type="project" value="InterPro"/>
</dbReference>
<dbReference type="GO" id="GO:0022857">
    <property type="term" value="F:transmembrane transporter activity"/>
    <property type="evidence" value="ECO:0007669"/>
    <property type="project" value="InterPro"/>
</dbReference>
<dbReference type="FunFam" id="3.40.50.300:FF:000425">
    <property type="entry name" value="Probable ABC transporter, ATP-binding subunit"/>
    <property type="match status" value="1"/>
</dbReference>
<dbReference type="Gene3D" id="3.40.50.300">
    <property type="entry name" value="P-loop containing nucleotide triphosphate hydrolases"/>
    <property type="match status" value="1"/>
</dbReference>
<dbReference type="InterPro" id="IPR003593">
    <property type="entry name" value="AAA+_ATPase"/>
</dbReference>
<dbReference type="InterPro" id="IPR050093">
    <property type="entry name" value="ABC_SmlMolc_Importer"/>
</dbReference>
<dbReference type="InterPro" id="IPR003439">
    <property type="entry name" value="ABC_transporter-like_ATP-bd"/>
</dbReference>
<dbReference type="InterPro" id="IPR017871">
    <property type="entry name" value="ABC_transporter-like_CS"/>
</dbReference>
<dbReference type="InterPro" id="IPR017662">
    <property type="entry name" value="AminoethylPonate_ABC_PhnT"/>
</dbReference>
<dbReference type="InterPro" id="IPR008995">
    <property type="entry name" value="Mo/tungstate-bd_C_term_dom"/>
</dbReference>
<dbReference type="InterPro" id="IPR027417">
    <property type="entry name" value="P-loop_NTPase"/>
</dbReference>
<dbReference type="InterPro" id="IPR013611">
    <property type="entry name" value="Transp-assoc_OB_typ2"/>
</dbReference>
<dbReference type="NCBIfam" id="TIGR03258">
    <property type="entry name" value="PhnT"/>
    <property type="match status" value="1"/>
</dbReference>
<dbReference type="PANTHER" id="PTHR42781">
    <property type="entry name" value="SPERMIDINE/PUTRESCINE IMPORT ATP-BINDING PROTEIN POTA"/>
    <property type="match status" value="1"/>
</dbReference>
<dbReference type="PANTHER" id="PTHR42781:SF4">
    <property type="entry name" value="SPERMIDINE_PUTRESCINE IMPORT ATP-BINDING PROTEIN POTA"/>
    <property type="match status" value="1"/>
</dbReference>
<dbReference type="Pfam" id="PF00005">
    <property type="entry name" value="ABC_tran"/>
    <property type="match status" value="1"/>
</dbReference>
<dbReference type="Pfam" id="PF08402">
    <property type="entry name" value="TOBE_2"/>
    <property type="match status" value="1"/>
</dbReference>
<dbReference type="SMART" id="SM00382">
    <property type="entry name" value="AAA"/>
    <property type="match status" value="1"/>
</dbReference>
<dbReference type="SUPFAM" id="SSF50331">
    <property type="entry name" value="MOP-like"/>
    <property type="match status" value="1"/>
</dbReference>
<dbReference type="SUPFAM" id="SSF52540">
    <property type="entry name" value="P-loop containing nucleoside triphosphate hydrolases"/>
    <property type="match status" value="1"/>
</dbReference>
<dbReference type="PROSITE" id="PS00211">
    <property type="entry name" value="ABC_TRANSPORTER_1"/>
    <property type="match status" value="1"/>
</dbReference>
<dbReference type="PROSITE" id="PS50893">
    <property type="entry name" value="ABC_TRANSPORTER_2"/>
    <property type="match status" value="1"/>
</dbReference>
<reference key="1">
    <citation type="journal article" date="2005" name="Nucleic Acids Res.">
        <title>The genome sequence of Salmonella enterica serovar Choleraesuis, a highly invasive and resistant zoonotic pathogen.</title>
        <authorList>
            <person name="Chiu C.-H."/>
            <person name="Tang P."/>
            <person name="Chu C."/>
            <person name="Hu S."/>
            <person name="Bao Q."/>
            <person name="Yu J."/>
            <person name="Chou Y.-Y."/>
            <person name="Wang H.-S."/>
            <person name="Lee Y.-S."/>
        </authorList>
    </citation>
    <scope>NUCLEOTIDE SEQUENCE [LARGE SCALE GENOMIC DNA]</scope>
    <source>
        <strain>SC-B67</strain>
    </source>
</reference>
<comment type="function">
    <text evidence="1">Probably part of the PhnSTUV complex (TC 3.A.1.11.5) involved in 2-aminoethylphosphonate import. Probably responsible for energy coupling to the transport system (By similarity).</text>
</comment>
<comment type="subcellular location">
    <subcellularLocation>
        <location evidence="1">Cell inner membrane</location>
        <topology evidence="1">Peripheral membrane protein</topology>
    </subcellularLocation>
</comment>
<comment type="similarity">
    <text evidence="3">Belongs to the ABC transporter superfamily. 2-aminoethylphosphonate importer (TC 3.A.1.11.5) family.</text>
</comment>
<protein>
    <recommendedName>
        <fullName>Putative 2-aminoethylphosphonate import ATP-binding protein PhnT</fullName>
    </recommendedName>
</protein>